<comment type="function">
    <text evidence="6 7 8">Involved in RNA-mediated post-transcriptional gene silencing (PTGS). Main component of the RNA-induced silencing complex (RISC) that binds to a short guide RNA such as a microRNA (miRNA) or small interfering RNA (siRNA). RISC uses the mature miRNA or siRNA as a guide for slicer-directed cleavage of homologous mRNAs to repress gene expression. Associates with siRNAs of various sizes, from 21-24 nucleotide in length and preferentially recruits small RNAs with a 5' terminal cytosine. Probably involved in antiviral RNA silencing. Associates with siRNAs derived from cucumber mosaic virus (CMV). Targeted by the turnip yellows virus (TuYV) protein P0 (via F-box-like domain) for probable proteasome degradation and thereby inactivating AGO5 function in RNA silencing.</text>
</comment>
<comment type="cofactor">
    <cofactor evidence="1">
        <name>Mg(2+)</name>
        <dbReference type="ChEBI" id="CHEBI:18420"/>
    </cofactor>
    <cofactor evidence="1">
        <name>Mn(2+)</name>
        <dbReference type="ChEBI" id="CHEBI:29035"/>
    </cofactor>
</comment>
<comment type="similarity">
    <text evidence="9">Belongs to the argonaute family. Ago subfamily.</text>
</comment>
<protein>
    <recommendedName>
        <fullName>Protein argonaute 5</fullName>
    </recommendedName>
</protein>
<feature type="chain" id="PRO_0000194070" description="Protein argonaute 5">
    <location>
        <begin position="1"/>
        <end position="997"/>
    </location>
</feature>
<feature type="domain" description="PAZ" evidence="3">
    <location>
        <begin position="360"/>
        <end position="471"/>
    </location>
</feature>
<feature type="domain" description="Piwi" evidence="4">
    <location>
        <begin position="638"/>
        <end position="958"/>
    </location>
</feature>
<feature type="region of interest" description="Disordered" evidence="5">
    <location>
        <begin position="1"/>
        <end position="144"/>
    </location>
</feature>
<feature type="region of interest" description="Interaction with guide RNA" evidence="2">
    <location>
        <begin position="847"/>
        <end position="848"/>
    </location>
</feature>
<feature type="region of interest" description="Interaction with guide RNA" evidence="2">
    <location>
        <begin position="893"/>
        <end position="901"/>
    </location>
</feature>
<feature type="region of interest" description="Interaction with guide RNA" evidence="2">
    <location>
        <begin position="930"/>
        <end position="952"/>
    </location>
</feature>
<feature type="compositionally biased region" description="Gly residues" evidence="5">
    <location>
        <begin position="1"/>
        <end position="16"/>
    </location>
</feature>
<feature type="compositionally biased region" description="Gly residues" evidence="5">
    <location>
        <begin position="43"/>
        <end position="59"/>
    </location>
</feature>
<feature type="compositionally biased region" description="Low complexity" evidence="5">
    <location>
        <begin position="93"/>
        <end position="106"/>
    </location>
</feature>
<feature type="compositionally biased region" description="Polar residues" evidence="5">
    <location>
        <begin position="116"/>
        <end position="129"/>
    </location>
</feature>
<feature type="binding site" evidence="1">
    <location>
        <position position="721"/>
    </location>
    <ligand>
        <name>a divalent metal cation</name>
        <dbReference type="ChEBI" id="CHEBI:60240"/>
    </ligand>
</feature>
<feature type="binding site" evidence="1">
    <location>
        <position position="807"/>
    </location>
    <ligand>
        <name>a divalent metal cation</name>
        <dbReference type="ChEBI" id="CHEBI:60240"/>
    </ligand>
</feature>
<feature type="binding site" evidence="1">
    <location>
        <position position="947"/>
    </location>
    <ligand>
        <name>a divalent metal cation</name>
        <dbReference type="ChEBI" id="CHEBI:60240"/>
    </ligand>
</feature>
<feature type="sequence conflict" description="In Ref. 1; AAD21514." evidence="9" ref="1">
    <original>G</original>
    <variation>C</variation>
    <location>
        <position position="402"/>
    </location>
</feature>
<feature type="strand" evidence="10">
    <location>
        <begin position="563"/>
        <end position="567"/>
    </location>
</feature>
<feature type="strand" evidence="10">
    <location>
        <begin position="573"/>
        <end position="578"/>
    </location>
</feature>
<feature type="strand" evidence="10">
    <location>
        <begin position="581"/>
        <end position="583"/>
    </location>
</feature>
<feature type="helix" evidence="10">
    <location>
        <begin position="587"/>
        <end position="602"/>
    </location>
</feature>
<feature type="helix" evidence="10">
    <location>
        <begin position="619"/>
        <end position="621"/>
    </location>
</feature>
<feature type="helix" evidence="10">
    <location>
        <begin position="622"/>
        <end position="632"/>
    </location>
</feature>
<feature type="strand" evidence="10">
    <location>
        <begin position="637"/>
        <end position="642"/>
    </location>
</feature>
<feature type="strand" evidence="10">
    <location>
        <begin position="645"/>
        <end position="648"/>
    </location>
</feature>
<feature type="helix" evidence="10">
    <location>
        <begin position="650"/>
        <end position="658"/>
    </location>
</feature>
<feature type="turn" evidence="10">
    <location>
        <begin position="659"/>
        <end position="661"/>
    </location>
</feature>
<feature type="strand" evidence="10">
    <location>
        <begin position="665"/>
        <end position="668"/>
    </location>
</feature>
<feature type="helix" evidence="10">
    <location>
        <begin position="670"/>
        <end position="675"/>
    </location>
</feature>
<feature type="helix" evidence="10">
    <location>
        <begin position="678"/>
        <end position="691"/>
    </location>
</feature>
<feature type="strand" evidence="10">
    <location>
        <begin position="695"/>
        <end position="698"/>
    </location>
</feature>
<accession>Q9SJK3</accession>
<dbReference type="EMBL" id="AC006929">
    <property type="protein sequence ID" value="AAD21514.1"/>
    <property type="molecule type" value="Genomic_DNA"/>
</dbReference>
<dbReference type="EMBL" id="CP002685">
    <property type="protein sequence ID" value="AEC08055.1"/>
    <property type="molecule type" value="Genomic_DNA"/>
</dbReference>
<dbReference type="PIR" id="A84678">
    <property type="entry name" value="A84678"/>
</dbReference>
<dbReference type="RefSeq" id="NP_850110.1">
    <property type="nucleotide sequence ID" value="NM_179779.3"/>
</dbReference>
<dbReference type="PDB" id="4G0O">
    <property type="method" value="X-ray"/>
    <property type="resolution" value="2.19 A"/>
    <property type="chains" value="A/B=562-699"/>
</dbReference>
<dbReference type="PDBsum" id="4G0O"/>
<dbReference type="SMR" id="Q9SJK3"/>
<dbReference type="BioGRID" id="2684">
    <property type="interactions" value="3"/>
</dbReference>
<dbReference type="FunCoup" id="Q9SJK3">
    <property type="interactions" value="2571"/>
</dbReference>
<dbReference type="STRING" id="3702.Q9SJK3"/>
<dbReference type="iPTMnet" id="Q9SJK3"/>
<dbReference type="PaxDb" id="3702-AT2G27880.1"/>
<dbReference type="ProteomicsDB" id="244662"/>
<dbReference type="EnsemblPlants" id="AT2G27880.1">
    <property type="protein sequence ID" value="AT2G27880.1"/>
    <property type="gene ID" value="AT2G27880"/>
</dbReference>
<dbReference type="GeneID" id="817334"/>
<dbReference type="Gramene" id="AT2G27880.1">
    <property type="protein sequence ID" value="AT2G27880.1"/>
    <property type="gene ID" value="AT2G27880"/>
</dbReference>
<dbReference type="KEGG" id="ath:AT2G27880"/>
<dbReference type="Araport" id="AT2G27880"/>
<dbReference type="TAIR" id="AT2G27880">
    <property type="gene designation" value="AGO5"/>
</dbReference>
<dbReference type="eggNOG" id="KOG1041">
    <property type="taxonomic scope" value="Eukaryota"/>
</dbReference>
<dbReference type="HOGENOM" id="CLU_004544_0_0_1"/>
<dbReference type="InParanoid" id="Q9SJK3"/>
<dbReference type="OMA" id="RVRITHI"/>
<dbReference type="PhylomeDB" id="Q9SJK3"/>
<dbReference type="CD-CODE" id="4299E36E">
    <property type="entry name" value="Nucleolus"/>
</dbReference>
<dbReference type="EvolutionaryTrace" id="Q9SJK3"/>
<dbReference type="PRO" id="PR:Q9SJK3"/>
<dbReference type="Proteomes" id="UP000006548">
    <property type="component" value="Chromosome 2"/>
</dbReference>
<dbReference type="ExpressionAtlas" id="Q9SJK3">
    <property type="expression patterns" value="baseline and differential"/>
</dbReference>
<dbReference type="GO" id="GO:0005829">
    <property type="term" value="C:cytosol"/>
    <property type="evidence" value="ECO:0000314"/>
    <property type="project" value="TAIR"/>
</dbReference>
<dbReference type="GO" id="GO:1990904">
    <property type="term" value="C:ribonucleoprotein complex"/>
    <property type="evidence" value="ECO:0007669"/>
    <property type="project" value="UniProtKB-KW"/>
</dbReference>
<dbReference type="GO" id="GO:0046872">
    <property type="term" value="F:metal ion binding"/>
    <property type="evidence" value="ECO:0007669"/>
    <property type="project" value="UniProtKB-KW"/>
</dbReference>
<dbReference type="GO" id="GO:0003723">
    <property type="term" value="F:RNA binding"/>
    <property type="evidence" value="ECO:0007669"/>
    <property type="project" value="UniProtKB-KW"/>
</dbReference>
<dbReference type="GO" id="GO:0098542">
    <property type="term" value="P:defense response to other organism"/>
    <property type="evidence" value="ECO:0000270"/>
    <property type="project" value="TAIR"/>
</dbReference>
<dbReference type="GO" id="GO:0006417">
    <property type="term" value="P:regulation of translation"/>
    <property type="evidence" value="ECO:0007669"/>
    <property type="project" value="UniProtKB-KW"/>
</dbReference>
<dbReference type="GO" id="GO:0009615">
    <property type="term" value="P:response to virus"/>
    <property type="evidence" value="ECO:0000270"/>
    <property type="project" value="TAIR"/>
</dbReference>
<dbReference type="GO" id="GO:0009616">
    <property type="term" value="P:RNAi-mediated antiviral immune response"/>
    <property type="evidence" value="ECO:0000316"/>
    <property type="project" value="TAIR"/>
</dbReference>
<dbReference type="CDD" id="cd02846">
    <property type="entry name" value="PAZ_argonaute_like"/>
    <property type="match status" value="1"/>
</dbReference>
<dbReference type="CDD" id="cd04657">
    <property type="entry name" value="Piwi_ago-like"/>
    <property type="match status" value="1"/>
</dbReference>
<dbReference type="FunFam" id="3.40.50.2300:FF:000110">
    <property type="entry name" value="Argonaute 10"/>
    <property type="match status" value="1"/>
</dbReference>
<dbReference type="FunFam" id="3.30.420.10:FF:000013">
    <property type="entry name" value="protein argonaute 10-like"/>
    <property type="match status" value="1"/>
</dbReference>
<dbReference type="Gene3D" id="3.40.50.2300">
    <property type="match status" value="1"/>
</dbReference>
<dbReference type="Gene3D" id="2.170.260.10">
    <property type="entry name" value="paz domain"/>
    <property type="match status" value="1"/>
</dbReference>
<dbReference type="Gene3D" id="3.30.420.10">
    <property type="entry name" value="Ribonuclease H-like superfamily/Ribonuclease H"/>
    <property type="match status" value="1"/>
</dbReference>
<dbReference type="InterPro" id="IPR014811">
    <property type="entry name" value="ArgoL1"/>
</dbReference>
<dbReference type="InterPro" id="IPR032472">
    <property type="entry name" value="ArgoL2"/>
</dbReference>
<dbReference type="InterPro" id="IPR032473">
    <property type="entry name" value="Argonaute_Mid_dom"/>
</dbReference>
<dbReference type="InterPro" id="IPR032474">
    <property type="entry name" value="Argonaute_N"/>
</dbReference>
<dbReference type="InterPro" id="IPR003100">
    <property type="entry name" value="PAZ_dom"/>
</dbReference>
<dbReference type="InterPro" id="IPR036085">
    <property type="entry name" value="PAZ_dom_sf"/>
</dbReference>
<dbReference type="InterPro" id="IPR003165">
    <property type="entry name" value="Piwi"/>
</dbReference>
<dbReference type="InterPro" id="IPR045246">
    <property type="entry name" value="Piwi_ago-like"/>
</dbReference>
<dbReference type="InterPro" id="IPR012337">
    <property type="entry name" value="RNaseH-like_sf"/>
</dbReference>
<dbReference type="InterPro" id="IPR036397">
    <property type="entry name" value="RNaseH_sf"/>
</dbReference>
<dbReference type="PANTHER" id="PTHR22891">
    <property type="entry name" value="EUKARYOTIC TRANSLATION INITIATION FACTOR 2C"/>
    <property type="match status" value="1"/>
</dbReference>
<dbReference type="Pfam" id="PF08699">
    <property type="entry name" value="ArgoL1"/>
    <property type="match status" value="1"/>
</dbReference>
<dbReference type="Pfam" id="PF16488">
    <property type="entry name" value="ArgoL2"/>
    <property type="match status" value="1"/>
</dbReference>
<dbReference type="Pfam" id="PF16487">
    <property type="entry name" value="ArgoMid"/>
    <property type="match status" value="1"/>
</dbReference>
<dbReference type="Pfam" id="PF16486">
    <property type="entry name" value="ArgoN"/>
    <property type="match status" value="1"/>
</dbReference>
<dbReference type="Pfam" id="PF02170">
    <property type="entry name" value="PAZ"/>
    <property type="match status" value="1"/>
</dbReference>
<dbReference type="Pfam" id="PF02171">
    <property type="entry name" value="Piwi"/>
    <property type="match status" value="1"/>
</dbReference>
<dbReference type="SMART" id="SM01163">
    <property type="entry name" value="DUF1785"/>
    <property type="match status" value="1"/>
</dbReference>
<dbReference type="SMART" id="SM00949">
    <property type="entry name" value="PAZ"/>
    <property type="match status" value="1"/>
</dbReference>
<dbReference type="SMART" id="SM00950">
    <property type="entry name" value="Piwi"/>
    <property type="match status" value="1"/>
</dbReference>
<dbReference type="SUPFAM" id="SSF101690">
    <property type="entry name" value="PAZ domain"/>
    <property type="match status" value="1"/>
</dbReference>
<dbReference type="SUPFAM" id="SSF53098">
    <property type="entry name" value="Ribonuclease H-like"/>
    <property type="match status" value="1"/>
</dbReference>
<dbReference type="PROSITE" id="PS50821">
    <property type="entry name" value="PAZ"/>
    <property type="match status" value="1"/>
</dbReference>
<dbReference type="PROSITE" id="PS50822">
    <property type="entry name" value="PIWI"/>
    <property type="match status" value="1"/>
</dbReference>
<proteinExistence type="evidence at protein level"/>
<name>AGO5_ARATH</name>
<evidence type="ECO:0000250" key="1"/>
<evidence type="ECO:0000255" key="2"/>
<evidence type="ECO:0000255" key="3">
    <source>
        <dbReference type="PROSITE-ProRule" id="PRU00142"/>
    </source>
</evidence>
<evidence type="ECO:0000255" key="4">
    <source>
        <dbReference type="PROSITE-ProRule" id="PRU00150"/>
    </source>
</evidence>
<evidence type="ECO:0000256" key="5">
    <source>
        <dbReference type="SAM" id="MobiDB-lite"/>
    </source>
</evidence>
<evidence type="ECO:0000269" key="6">
    <source>
    </source>
</evidence>
<evidence type="ECO:0000269" key="7">
    <source>
    </source>
</evidence>
<evidence type="ECO:0000269" key="8">
    <source>
    </source>
</evidence>
<evidence type="ECO:0000305" key="9"/>
<evidence type="ECO:0007829" key="10">
    <source>
        <dbReference type="PDB" id="4G0O"/>
    </source>
</evidence>
<keyword id="KW-0002">3D-structure</keyword>
<keyword id="KW-0460">Magnesium</keyword>
<keyword id="KW-0464">Manganese</keyword>
<keyword id="KW-0479">Metal-binding</keyword>
<keyword id="KW-0611">Plant defense</keyword>
<keyword id="KW-1185">Reference proteome</keyword>
<keyword id="KW-0678">Repressor</keyword>
<keyword id="KW-0687">Ribonucleoprotein</keyword>
<keyword id="KW-0694">RNA-binding</keyword>
<keyword id="KW-0943">RNA-mediated gene silencing</keyword>
<keyword id="KW-0804">Transcription</keyword>
<keyword id="KW-0805">Transcription regulation</keyword>
<keyword id="KW-0810">Translation regulation</keyword>
<organism>
    <name type="scientific">Arabidopsis thaliana</name>
    <name type="common">Mouse-ear cress</name>
    <dbReference type="NCBI Taxonomy" id="3702"/>
    <lineage>
        <taxon>Eukaryota</taxon>
        <taxon>Viridiplantae</taxon>
        <taxon>Streptophyta</taxon>
        <taxon>Embryophyta</taxon>
        <taxon>Tracheophyta</taxon>
        <taxon>Spermatophyta</taxon>
        <taxon>Magnoliopsida</taxon>
        <taxon>eudicotyledons</taxon>
        <taxon>Gunneridae</taxon>
        <taxon>Pentapetalae</taxon>
        <taxon>rosids</taxon>
        <taxon>malvids</taxon>
        <taxon>Brassicales</taxon>
        <taxon>Brassicaceae</taxon>
        <taxon>Camelineae</taxon>
        <taxon>Arabidopsis</taxon>
    </lineage>
</organism>
<sequence>MSNRGGGGHGGASRGRGGGRRSDQRQDQSSGQVAWPGLQQSYGGRGGSVSAGRGRGNVGRGENTGDLTATQVPVASAVSGGRGRGNIGDPTFSVASSSKTVSVASSSKEESKNTEVSETMSNLQITSTETKPEMTSLPPASSKAVTFPVRPGRGTLGKKVMVRANHFLVQVADRDLYHYDVSINPEVISKTVNRNVMKLLVKNYKDSHLGGKSPAYDGRKSLYTAGPLPFDSKEFVVNLAEKRADGSSGKDRPFKVAVKNVTSTDLYQLQQFLDRKQREAPYDTIQVLDVVLRDKPSNDYVSVGRSFFHTSLGKDARDGRGELGDGIEYWRGYFQSLRLTQMGLSLNIDVSARSFYEPIVVTDFISKFLNIRDLNRPLRDSDRLKVKKVLRTLKVKLLHWNGTKSAKISGISSLPIRELRFTLEDKSEKTVVQYFAEKYNYRVKYQALPAIQTGSDTRPVYLPMELCQIDEGQRYTKRLNEKQVTALLKATCQRPPDRENSIKNLVVKNNYNDDLSKEFGMSVTTQLASIEARVLPPPMLKYHDSGKEKMVNPRLGQWNMIDKKMVNGAKVTSWTCVSFSTRIDRGLPQEFCKQLIGMCVSKGMEFKPQPAIPFISCPPEHIEEALLDIHKRAPGLQLLIVILPDVTGSYGKIKRICETELGIVSQCCQPRQVNKLNKQYMENVALKINVKTGGRNTVLNDAIRRNIPLITDRPTIIMGADVTHPQPGEDSSPSIAAVVASMDWPEINKYRGLVSAQAHREEIIQDLYKLVQDPQRGLVHSGLIREHFIAFRRATGQIPQRIIFYRDGVSEGQFSQVLLHEMTAIRKACNSLQENYVPRVTFVIVQKRHHTRLFPEQHGNRDMTDKSGNIQPGTVVDTKICHPNEFDFYLNSHAGIQGTSRPAHYHVLLDENGFTADQLQMLTNNLCYTYARCTKSVSIVPPAYYAHLAAFRARYYMESEMSDGGSSRSRSSTTGVGQVISQLPAIKDNVKEVMFYC</sequence>
<gene>
    <name type="primary">AGO5</name>
    <name type="ordered locus">At2g27880</name>
    <name type="ORF">T1E2.20</name>
</gene>
<reference key="1">
    <citation type="journal article" date="1999" name="Nature">
        <title>Sequence and analysis of chromosome 2 of the plant Arabidopsis thaliana.</title>
        <authorList>
            <person name="Lin X."/>
            <person name="Kaul S."/>
            <person name="Rounsley S.D."/>
            <person name="Shea T.P."/>
            <person name="Benito M.-I."/>
            <person name="Town C.D."/>
            <person name="Fujii C.Y."/>
            <person name="Mason T.M."/>
            <person name="Bowman C.L."/>
            <person name="Barnstead M.E."/>
            <person name="Feldblyum T.V."/>
            <person name="Buell C.R."/>
            <person name="Ketchum K.A."/>
            <person name="Lee J.J."/>
            <person name="Ronning C.M."/>
            <person name="Koo H.L."/>
            <person name="Moffat K.S."/>
            <person name="Cronin L.A."/>
            <person name="Shen M."/>
            <person name="Pai G."/>
            <person name="Van Aken S."/>
            <person name="Umayam L."/>
            <person name="Tallon L.J."/>
            <person name="Gill J.E."/>
            <person name="Adams M.D."/>
            <person name="Carrera A.J."/>
            <person name="Creasy T.H."/>
            <person name="Goodman H.M."/>
            <person name="Somerville C.R."/>
            <person name="Copenhaver G.P."/>
            <person name="Preuss D."/>
            <person name="Nierman W.C."/>
            <person name="White O."/>
            <person name="Eisen J.A."/>
            <person name="Salzberg S.L."/>
            <person name="Fraser C.M."/>
            <person name="Venter J.C."/>
        </authorList>
    </citation>
    <scope>NUCLEOTIDE SEQUENCE [LARGE SCALE GENOMIC DNA]</scope>
    <source>
        <strain>cv. Columbia</strain>
    </source>
</reference>
<reference key="2">
    <citation type="journal article" date="2017" name="Plant J.">
        <title>Araport11: a complete reannotation of the Arabidopsis thaliana reference genome.</title>
        <authorList>
            <person name="Cheng C.Y."/>
            <person name="Krishnakumar V."/>
            <person name="Chan A.P."/>
            <person name="Thibaud-Nissen F."/>
            <person name="Schobel S."/>
            <person name="Town C.D."/>
        </authorList>
    </citation>
    <scope>GENOME REANNOTATION</scope>
    <source>
        <strain>cv. Columbia</strain>
    </source>
</reference>
<reference key="3">
    <citation type="journal article" date="2007" name="Curr. Biol.">
        <title>The Polerovirus silencing suppressor P0 targets ARGONAUTE proteins for degradation.</title>
        <authorList>
            <person name="Baumberger N."/>
            <person name="Tsai C.-H."/>
            <person name="Lie M."/>
            <person name="Havecker E."/>
            <person name="Baulcombe D.C."/>
        </authorList>
    </citation>
    <scope>FUNCTION</scope>
</reference>
<reference key="4">
    <citation type="journal article" date="2007" name="Mol. Cell. Proteomics">
        <title>Multidimensional protein identification technology (MudPIT) analysis of ubiquitinated proteins in plants.</title>
        <authorList>
            <person name="Maor R."/>
            <person name="Jones A."/>
            <person name="Nuehse T.S."/>
            <person name="Studholme D.J."/>
            <person name="Peck S.C."/>
            <person name="Shirasu K."/>
        </authorList>
    </citation>
    <scope>IDENTIFICATION BY MASS SPECTROMETRY [LARGE SCALE ANALYSIS]</scope>
    <source>
        <strain>cv. Landsberg erecta</strain>
    </source>
</reference>
<reference key="5">
    <citation type="journal article" date="2008" name="Cell">
        <title>Sorting of small RNAs into Arabidopsis argonaute complexes is directed by the 5' terminal nucleotide.</title>
        <authorList>
            <person name="Mi S."/>
            <person name="Cai T."/>
            <person name="Hu Y."/>
            <person name="Chen Y."/>
            <person name="Hodges E."/>
            <person name="Ni F."/>
            <person name="Wu L."/>
            <person name="Li S."/>
            <person name="Zhou H."/>
            <person name="Long C."/>
            <person name="Chen S."/>
            <person name="Hannon G.J."/>
            <person name="Qi Y."/>
        </authorList>
    </citation>
    <scope>FUNCTION</scope>
    <scope>IDENTIFICATION BY MASS SPECTROMETRY</scope>
</reference>
<reference key="6">
    <citation type="journal article" date="2008" name="Plant Cell Physiol.">
        <title>The mechanism selecting the guide strand from small RNA duplexes is different among argonaute proteins.</title>
        <authorList>
            <person name="Takeda A."/>
            <person name="Iwasaki S."/>
            <person name="Watanabe T."/>
            <person name="Utsumi M."/>
            <person name="Watanabe Y."/>
        </authorList>
    </citation>
    <scope>FUNCTION</scope>
</reference>
<reference key="7">
    <citation type="journal article" date="2012" name="EMBO J.">
        <title>Arabidopsis Argonaute MID domains use their nucleotide specificity loop to sort small RNAs.</title>
        <authorList>
            <person name="Frank F."/>
            <person name="Hauver J."/>
            <person name="Sonenberg N."/>
            <person name="Nagar B."/>
        </authorList>
    </citation>
    <scope>X-RAY CRYSTALLOGRAPHY (2.19 ANGSTROMS) OF 562-699</scope>
</reference>